<proteinExistence type="predicted"/>
<dbReference type="EMBL" id="AE000782">
    <property type="status" value="NOT_ANNOTATED_CDS"/>
    <property type="molecule type" value="Genomic_DNA"/>
</dbReference>
<dbReference type="PhylomeDB" id="P58024"/>
<dbReference type="Proteomes" id="UP000002199">
    <property type="component" value="Chromosome"/>
</dbReference>
<organism>
    <name type="scientific">Archaeoglobus fulgidus (strain ATCC 49558 / DSM 4304 / JCM 9628 / NBRC 100126 / VC-16)</name>
    <dbReference type="NCBI Taxonomy" id="224325"/>
    <lineage>
        <taxon>Archaea</taxon>
        <taxon>Methanobacteriati</taxon>
        <taxon>Methanobacteriota</taxon>
        <taxon>Archaeoglobi</taxon>
        <taxon>Archaeoglobales</taxon>
        <taxon>Archaeoglobaceae</taxon>
        <taxon>Archaeoglobus</taxon>
    </lineage>
</organism>
<comment type="similarity">
    <text evidence="1">To P.abyssi PAB3148.</text>
</comment>
<keyword id="KW-1185">Reference proteome</keyword>
<feature type="chain" id="PRO_0000128154" description="Uncharacterized protein AF_2407.1">
    <location>
        <begin position="1"/>
        <end position="64"/>
    </location>
</feature>
<name>YO0A_ARCFU</name>
<reference key="1">
    <citation type="journal article" date="1997" name="Nature">
        <title>The complete genome sequence of the hyperthermophilic, sulphate-reducing archaeon Archaeoglobus fulgidus.</title>
        <authorList>
            <person name="Klenk H.-P."/>
            <person name="Clayton R.A."/>
            <person name="Tomb J.-F."/>
            <person name="White O."/>
            <person name="Nelson K.E."/>
            <person name="Ketchum K.A."/>
            <person name="Dodson R.J."/>
            <person name="Gwinn M.L."/>
            <person name="Hickey E.K."/>
            <person name="Peterson J.D."/>
            <person name="Richardson D.L."/>
            <person name="Kerlavage A.R."/>
            <person name="Graham D.E."/>
            <person name="Kyrpides N.C."/>
            <person name="Fleischmann R.D."/>
            <person name="Quackenbush J."/>
            <person name="Lee N.H."/>
            <person name="Sutton G.G."/>
            <person name="Gill S.R."/>
            <person name="Kirkness E.F."/>
            <person name="Dougherty B.A."/>
            <person name="McKenney K."/>
            <person name="Adams M.D."/>
            <person name="Loftus B.J."/>
            <person name="Peterson S.N."/>
            <person name="Reich C.I."/>
            <person name="McNeil L.K."/>
            <person name="Badger J.H."/>
            <person name="Glodek A."/>
            <person name="Zhou L."/>
            <person name="Overbeek R."/>
            <person name="Gocayne J.D."/>
            <person name="Weidman J.F."/>
            <person name="McDonald L.A."/>
            <person name="Utterback T.R."/>
            <person name="Cotton M.D."/>
            <person name="Spriggs T."/>
            <person name="Artiach P."/>
            <person name="Kaine B.P."/>
            <person name="Sykes S.M."/>
            <person name="Sadow P.W."/>
            <person name="D'Andrea K.P."/>
            <person name="Bowman C."/>
            <person name="Fujii C."/>
            <person name="Garland S.A."/>
            <person name="Mason T.M."/>
            <person name="Olsen G.J."/>
            <person name="Fraser C.M."/>
            <person name="Smith H.O."/>
            <person name="Woese C.R."/>
            <person name="Venter J.C."/>
        </authorList>
    </citation>
    <scope>NUCLEOTIDE SEQUENCE [LARGE SCALE GENOMIC DNA]</scope>
    <source>
        <strain>ATCC 49558 / DSM 4304 / JCM 9628 / NBRC 100126 / VC-16</strain>
    </source>
</reference>
<reference key="2">
    <citation type="unpublished observations" date="2001-04">
        <authorList>
            <person name="Medigue C."/>
            <person name="Bocs S."/>
        </authorList>
    </citation>
    <scope>IDENTIFICATION</scope>
</reference>
<sequence>MLPLDSMERRHLKCPLCSGEKFRAEEGKLDSKWGFTAHKVRIAICENCGYVMMFYKGRTIWDFD</sequence>
<gene>
    <name type="ordered locus">AF_2407.1</name>
</gene>
<protein>
    <recommendedName>
        <fullName>Uncharacterized protein AF_2407.1</fullName>
    </recommendedName>
</protein>
<evidence type="ECO:0000305" key="1"/>
<accession>P58024</accession>